<gene>
    <name evidence="1" type="primary">purC</name>
    <name type="ordered locus">Meso_1281</name>
</gene>
<protein>
    <recommendedName>
        <fullName evidence="1">Phosphoribosylaminoimidazole-succinocarboxamide synthase</fullName>
        <ecNumber evidence="1">6.3.2.6</ecNumber>
    </recommendedName>
    <alternativeName>
        <fullName evidence="1">SAICAR synthetase</fullName>
    </alternativeName>
</protein>
<comment type="catalytic activity">
    <reaction evidence="1">
        <text>5-amino-1-(5-phospho-D-ribosyl)imidazole-4-carboxylate + L-aspartate + ATP = (2S)-2-[5-amino-1-(5-phospho-beta-D-ribosyl)imidazole-4-carboxamido]succinate + ADP + phosphate + 2 H(+)</text>
        <dbReference type="Rhea" id="RHEA:22628"/>
        <dbReference type="ChEBI" id="CHEBI:15378"/>
        <dbReference type="ChEBI" id="CHEBI:29991"/>
        <dbReference type="ChEBI" id="CHEBI:30616"/>
        <dbReference type="ChEBI" id="CHEBI:43474"/>
        <dbReference type="ChEBI" id="CHEBI:58443"/>
        <dbReference type="ChEBI" id="CHEBI:77657"/>
        <dbReference type="ChEBI" id="CHEBI:456216"/>
        <dbReference type="EC" id="6.3.2.6"/>
    </reaction>
</comment>
<comment type="pathway">
    <text evidence="1">Purine metabolism; IMP biosynthesis via de novo pathway; 5-amino-1-(5-phospho-D-ribosyl)imidazole-4-carboxamide from 5-amino-1-(5-phospho-D-ribosyl)imidazole-4-carboxylate: step 1/2.</text>
</comment>
<comment type="similarity">
    <text evidence="1">Belongs to the SAICAR synthetase family.</text>
</comment>
<reference key="1">
    <citation type="submission" date="2006-06" db="EMBL/GenBank/DDBJ databases">
        <title>Complete sequence of chromosome of Mesorhizobium sp. BNC1.</title>
        <authorList>
            <consortium name="US DOE Joint Genome Institute"/>
            <person name="Copeland A."/>
            <person name="Lucas S."/>
            <person name="Lapidus A."/>
            <person name="Barry K."/>
            <person name="Detter J.C."/>
            <person name="Glavina del Rio T."/>
            <person name="Hammon N."/>
            <person name="Israni S."/>
            <person name="Dalin E."/>
            <person name="Tice H."/>
            <person name="Pitluck S."/>
            <person name="Chertkov O."/>
            <person name="Brettin T."/>
            <person name="Bruce D."/>
            <person name="Han C."/>
            <person name="Tapia R."/>
            <person name="Gilna P."/>
            <person name="Schmutz J."/>
            <person name="Larimer F."/>
            <person name="Land M."/>
            <person name="Hauser L."/>
            <person name="Kyrpides N."/>
            <person name="Mikhailova N."/>
            <person name="Richardson P."/>
        </authorList>
    </citation>
    <scope>NUCLEOTIDE SEQUENCE [LARGE SCALE GENOMIC DNA]</scope>
    <source>
        <strain>BNC1</strain>
    </source>
</reference>
<organism>
    <name type="scientific">Chelativorans sp. (strain BNC1)</name>
    <dbReference type="NCBI Taxonomy" id="266779"/>
    <lineage>
        <taxon>Bacteria</taxon>
        <taxon>Pseudomonadati</taxon>
        <taxon>Pseudomonadota</taxon>
        <taxon>Alphaproteobacteria</taxon>
        <taxon>Hyphomicrobiales</taxon>
        <taxon>Phyllobacteriaceae</taxon>
        <taxon>Chelativorans</taxon>
    </lineage>
</organism>
<name>PUR7_CHESB</name>
<keyword id="KW-0067">ATP-binding</keyword>
<keyword id="KW-0436">Ligase</keyword>
<keyword id="KW-0547">Nucleotide-binding</keyword>
<keyword id="KW-0658">Purine biosynthesis</keyword>
<dbReference type="EC" id="6.3.2.6" evidence="1"/>
<dbReference type="EMBL" id="CP000390">
    <property type="protein sequence ID" value="ABG62677.1"/>
    <property type="molecule type" value="Genomic_DNA"/>
</dbReference>
<dbReference type="SMR" id="Q11IU8"/>
<dbReference type="STRING" id="266779.Meso_1281"/>
<dbReference type="KEGG" id="mes:Meso_1281"/>
<dbReference type="eggNOG" id="COG0152">
    <property type="taxonomic scope" value="Bacteria"/>
</dbReference>
<dbReference type="HOGENOM" id="CLU_061495_2_0_5"/>
<dbReference type="OrthoDB" id="9801549at2"/>
<dbReference type="UniPathway" id="UPA00074">
    <property type="reaction ID" value="UER00131"/>
</dbReference>
<dbReference type="GO" id="GO:0005829">
    <property type="term" value="C:cytosol"/>
    <property type="evidence" value="ECO:0007669"/>
    <property type="project" value="TreeGrafter"/>
</dbReference>
<dbReference type="GO" id="GO:0005524">
    <property type="term" value="F:ATP binding"/>
    <property type="evidence" value="ECO:0007669"/>
    <property type="project" value="UniProtKB-KW"/>
</dbReference>
<dbReference type="GO" id="GO:0004639">
    <property type="term" value="F:phosphoribosylaminoimidazolesuccinocarboxamide synthase activity"/>
    <property type="evidence" value="ECO:0007669"/>
    <property type="project" value="UniProtKB-UniRule"/>
</dbReference>
<dbReference type="GO" id="GO:0006189">
    <property type="term" value="P:'de novo' IMP biosynthetic process"/>
    <property type="evidence" value="ECO:0007669"/>
    <property type="project" value="UniProtKB-UniRule"/>
</dbReference>
<dbReference type="GO" id="GO:0009236">
    <property type="term" value="P:cobalamin biosynthetic process"/>
    <property type="evidence" value="ECO:0007669"/>
    <property type="project" value="InterPro"/>
</dbReference>
<dbReference type="CDD" id="cd01415">
    <property type="entry name" value="SAICAR_synt_PurC"/>
    <property type="match status" value="1"/>
</dbReference>
<dbReference type="FunFam" id="3.30.470.20:FF:000006">
    <property type="entry name" value="Phosphoribosylaminoimidazole-succinocarboxamide synthase"/>
    <property type="match status" value="1"/>
</dbReference>
<dbReference type="Gene3D" id="3.30.470.20">
    <property type="entry name" value="ATP-grasp fold, B domain"/>
    <property type="match status" value="1"/>
</dbReference>
<dbReference type="Gene3D" id="3.30.200.20">
    <property type="entry name" value="Phosphorylase Kinase, domain 1"/>
    <property type="match status" value="1"/>
</dbReference>
<dbReference type="HAMAP" id="MF_00137">
    <property type="entry name" value="SAICAR_synth"/>
    <property type="match status" value="1"/>
</dbReference>
<dbReference type="InterPro" id="IPR028923">
    <property type="entry name" value="SAICAR_synt/ADE2_N"/>
</dbReference>
<dbReference type="InterPro" id="IPR033934">
    <property type="entry name" value="SAICAR_synt_PurC"/>
</dbReference>
<dbReference type="InterPro" id="IPR001636">
    <property type="entry name" value="SAICAR_synth"/>
</dbReference>
<dbReference type="InterPro" id="IPR050089">
    <property type="entry name" value="SAICAR_synthetase"/>
</dbReference>
<dbReference type="InterPro" id="IPR018236">
    <property type="entry name" value="SAICAR_synthetase_CS"/>
</dbReference>
<dbReference type="NCBIfam" id="TIGR00081">
    <property type="entry name" value="purC"/>
    <property type="match status" value="1"/>
</dbReference>
<dbReference type="PANTHER" id="PTHR43599">
    <property type="entry name" value="MULTIFUNCTIONAL PROTEIN ADE2"/>
    <property type="match status" value="1"/>
</dbReference>
<dbReference type="PANTHER" id="PTHR43599:SF3">
    <property type="entry name" value="SI:DKEY-6E2.2"/>
    <property type="match status" value="1"/>
</dbReference>
<dbReference type="Pfam" id="PF01259">
    <property type="entry name" value="SAICAR_synt"/>
    <property type="match status" value="1"/>
</dbReference>
<dbReference type="SUPFAM" id="SSF56104">
    <property type="entry name" value="SAICAR synthase-like"/>
    <property type="match status" value="1"/>
</dbReference>
<dbReference type="PROSITE" id="PS01057">
    <property type="entry name" value="SAICAR_SYNTHETASE_1"/>
    <property type="match status" value="1"/>
</dbReference>
<accession>Q11IU8</accession>
<evidence type="ECO:0000255" key="1">
    <source>
        <dbReference type="HAMAP-Rule" id="MF_00137"/>
    </source>
</evidence>
<evidence type="ECO:0000256" key="2">
    <source>
        <dbReference type="SAM" id="MobiDB-lite"/>
    </source>
</evidence>
<feature type="chain" id="PRO_1000018727" description="Phosphoribosylaminoimidazole-succinocarboxamide synthase">
    <location>
        <begin position="1"/>
        <end position="263"/>
    </location>
</feature>
<feature type="region of interest" description="Disordered" evidence="2">
    <location>
        <begin position="239"/>
        <end position="263"/>
    </location>
</feature>
<proteinExistence type="inferred from homology"/>
<sequence length="263" mass="30065">MNRRRRIYEGKAKILYEGPEPGTLIQFFKDDATAFNKKKHEVVDGKGVLNNRISEYIFEHLNRIGIPTHFIRRLNMREQLIKEVEIVPLEIVVRNIAAGSLAKRLGIEEGTVLPRSIIEFYYKADALDDPMVSEEHITAFGWASPQEIDDIMALSIRVNDFLTGLFLGVGIQLVDFKIECGRLWEGDMMRIVVADEISPDSCRLWDINTRDKLDKDRFRRDMGGLVEAYQEVARRLGIMNENEPPKPAGPVLVSSKPDGETRH</sequence>